<evidence type="ECO:0000255" key="1"/>
<evidence type="ECO:0000255" key="2">
    <source>
        <dbReference type="PROSITE-ProRule" id="PRU00037"/>
    </source>
</evidence>
<evidence type="ECO:0000269" key="3">
    <source>
    </source>
</evidence>
<evidence type="ECO:0000269" key="4">
    <source>
    </source>
</evidence>
<evidence type="ECO:0000269" key="5">
    <source>
    </source>
</evidence>
<evidence type="ECO:0000269" key="6">
    <source>
    </source>
</evidence>
<evidence type="ECO:0000269" key="7">
    <source>
    </source>
</evidence>
<evidence type="ECO:0000269" key="8">
    <source>
    </source>
</evidence>
<evidence type="ECO:0000269" key="9">
    <source>
    </source>
</evidence>
<evidence type="ECO:0000269" key="10">
    <source>
    </source>
</evidence>
<evidence type="ECO:0000269" key="11">
    <source>
    </source>
</evidence>
<evidence type="ECO:0000269" key="12">
    <source>
    </source>
</evidence>
<evidence type="ECO:0000269" key="13">
    <source>
    </source>
</evidence>
<evidence type="ECO:0000269" key="14">
    <source>
    </source>
</evidence>
<evidence type="ECO:0000269" key="15">
    <source>
    </source>
</evidence>
<evidence type="ECO:0000303" key="16">
    <source>
    </source>
</evidence>
<evidence type="ECO:0000305" key="17"/>
<evidence type="ECO:0000312" key="18">
    <source>
        <dbReference type="HGNC" id="HGNC:6742"/>
    </source>
</evidence>
<evidence type="ECO:0007744" key="19">
    <source>
    </source>
</evidence>
<accession>Q8N653</accession>
<accession>Q14776</accession>
<accession>Q20WK0</accession>
<keyword id="KW-0007">Acetylation</keyword>
<keyword id="KW-0225">Disease variant</keyword>
<keyword id="KW-0967">Endosome</keyword>
<keyword id="KW-0333">Golgi apparatus</keyword>
<keyword id="KW-0880">Kelch repeat</keyword>
<keyword id="KW-0472">Membrane</keyword>
<keyword id="KW-0597">Phosphoprotein</keyword>
<keyword id="KW-1267">Proteomics identification</keyword>
<keyword id="KW-1185">Reference proteome</keyword>
<keyword id="KW-0677">Repeat</keyword>
<keyword id="KW-0833">Ubl conjugation pathway</keyword>
<name>LZTR1_HUMAN</name>
<reference key="1">
    <citation type="journal article" date="2004" name="Genome Biol.">
        <title>A genome annotation-driven approach to cloning the human ORFeome.</title>
        <authorList>
            <person name="Collins J.E."/>
            <person name="Wright C.L."/>
            <person name="Edwards C.A."/>
            <person name="Davis M.P."/>
            <person name="Grinham J.A."/>
            <person name="Cole C.G."/>
            <person name="Goward M.E."/>
            <person name="Aguado B."/>
            <person name="Mallya M."/>
            <person name="Mokrab Y."/>
            <person name="Huckle E.J."/>
            <person name="Beare D.M."/>
            <person name="Dunham I."/>
        </authorList>
    </citation>
    <scope>NUCLEOTIDE SEQUENCE [LARGE SCALE MRNA]</scope>
</reference>
<reference key="2">
    <citation type="submission" date="2005-09" db="EMBL/GenBank/DDBJ databases">
        <authorList>
            <person name="Mural R.J."/>
            <person name="Istrail S."/>
            <person name="Sutton G.G."/>
            <person name="Florea L."/>
            <person name="Halpern A.L."/>
            <person name="Mobarry C.M."/>
            <person name="Lippert R."/>
            <person name="Walenz B."/>
            <person name="Shatkay H."/>
            <person name="Dew I."/>
            <person name="Miller J.R."/>
            <person name="Flanigan M.J."/>
            <person name="Edwards N.J."/>
            <person name="Bolanos R."/>
            <person name="Fasulo D."/>
            <person name="Halldorsson B.V."/>
            <person name="Hannenhalli S."/>
            <person name="Turner R."/>
            <person name="Yooseph S."/>
            <person name="Lu F."/>
            <person name="Nusskern D.R."/>
            <person name="Shue B.C."/>
            <person name="Zheng X.H."/>
            <person name="Zhong F."/>
            <person name="Delcher A.L."/>
            <person name="Huson D.H."/>
            <person name="Kravitz S.A."/>
            <person name="Mouchard L."/>
            <person name="Reinert K."/>
            <person name="Remington K.A."/>
            <person name="Clark A.G."/>
            <person name="Waterman M.S."/>
            <person name="Eichler E.E."/>
            <person name="Adams M.D."/>
            <person name="Hunkapiller M.W."/>
            <person name="Myers E.W."/>
            <person name="Venter J.C."/>
        </authorList>
    </citation>
    <scope>NUCLEOTIDE SEQUENCE [LARGE SCALE GENOMIC DNA]</scope>
</reference>
<reference key="3">
    <citation type="journal article" date="2004" name="Genome Res.">
        <title>The status, quality, and expansion of the NIH full-length cDNA project: the Mammalian Gene Collection (MGC).</title>
        <authorList>
            <consortium name="The MGC Project Team"/>
        </authorList>
    </citation>
    <scope>NUCLEOTIDE SEQUENCE [LARGE SCALE MRNA]</scope>
    <source>
        <tissue>Duodenal adenocarcinoma</tissue>
    </source>
</reference>
<reference key="4">
    <citation type="journal article" date="1995" name="Hum. Mol. Genet.">
        <title>Isolation and characterization of a novel gene deleted in DiGeorge syndrome.</title>
        <authorList>
            <person name="Kurahashi H."/>
            <person name="Akagi K."/>
            <person name="Inazawa J."/>
            <person name="Ohta T."/>
            <person name="Niikawa N."/>
            <person name="Kayatani F."/>
            <person name="Sano T."/>
            <person name="Okada S."/>
            <person name="Nishisho I."/>
        </authorList>
    </citation>
    <scope>NUCLEOTIDE SEQUENCE [MRNA] OF 3-840</scope>
    <scope>TISSUE SPECIFICITY</scope>
    <source>
        <tissue>Fetal brain</tissue>
    </source>
</reference>
<reference key="5">
    <citation type="journal article" date="2006" name="J. Biol. Chem.">
        <title>The BTB-kelch protein LZTR-1 is a novel Golgi protein that is degraded upon induction of apoptosis.</title>
        <authorList>
            <person name="Nacak T.G."/>
            <person name="Leptien K."/>
            <person name="Fellner D."/>
            <person name="Augustin H.G."/>
            <person name="Kroll J."/>
        </authorList>
    </citation>
    <scope>SUBCELLULAR LOCATION</scope>
    <scope>PHOSPHORYLATION</scope>
    <scope>DEGRADATION</scope>
</reference>
<reference key="6">
    <citation type="journal article" date="2012" name="Proc. Natl. Acad. Sci. U.S.A.">
        <title>N-terminal acetylome analyses and functional insights of the N-terminal acetyltransferase NatB.</title>
        <authorList>
            <person name="Van Damme P."/>
            <person name="Lasa M."/>
            <person name="Polevoda B."/>
            <person name="Gazquez C."/>
            <person name="Elosegui-Artola A."/>
            <person name="Kim D.S."/>
            <person name="De Juan-Pardo E."/>
            <person name="Demeyer K."/>
            <person name="Hole K."/>
            <person name="Larrea E."/>
            <person name="Timmerman E."/>
            <person name="Prieto J."/>
            <person name="Arnesen T."/>
            <person name="Sherman F."/>
            <person name="Gevaert K."/>
            <person name="Aldabe R."/>
        </authorList>
    </citation>
    <scope>ACETYLATION [LARGE SCALE ANALYSIS] AT ALA-2</scope>
    <scope>CLEAVAGE OF INITIATOR METHIONINE [LARGE SCALE ANALYSIS]</scope>
    <scope>IDENTIFICATION BY MASS SPECTROMETRY [LARGE SCALE ANALYSIS]</scope>
</reference>
<reference key="7">
    <citation type="journal article" date="2014" name="Nat. Genet.">
        <title>Germline loss-of-function mutations in LZTR1 predispose to an inherited disorder of multiple schwannomas.</title>
        <authorList>
            <person name="Piotrowski A."/>
            <person name="Xie J."/>
            <person name="Liu Y.F."/>
            <person name="Poplawski A.B."/>
            <person name="Gomes A.R."/>
            <person name="Madanecki P."/>
            <person name="Fu C."/>
            <person name="Crowley M.R."/>
            <person name="Crossman D.K."/>
            <person name="Armstrong L."/>
            <person name="Babovic-Vuksanovic D."/>
            <person name="Bergner A."/>
            <person name="Blakeley J.O."/>
            <person name="Blumenthal A.L."/>
            <person name="Daniels M.S."/>
            <person name="Feit H."/>
            <person name="Gardner K."/>
            <person name="Hurst S."/>
            <person name="Kobelka C."/>
            <person name="Lee C."/>
            <person name="Nagy R."/>
            <person name="Rauen K.A."/>
            <person name="Slopis J.M."/>
            <person name="Suwannarat P."/>
            <person name="Westman J.A."/>
            <person name="Zanko A."/>
            <person name="Korf B.R."/>
            <person name="Messiaen L.M."/>
        </authorList>
    </citation>
    <scope>INVOLVEMENT IN SWN2</scope>
    <scope>VARIANTS SWN2 LEU-122; ARG-404; GLY-456; GLN-466; LEU-520; CYS-688 AND ILE-813</scope>
</reference>
<reference key="8">
    <citation type="journal article" date="2015" name="J. Med. Genet.">
        <title>Rare variants in SOS2 and LZTR1 are associated with Noonan syndrome.</title>
        <authorList>
            <person name="Yamamoto G.L."/>
            <person name="Aguena M."/>
            <person name="Gos M."/>
            <person name="Hung C."/>
            <person name="Pilch J."/>
            <person name="Fahiminiya S."/>
            <person name="Abramowicz A."/>
            <person name="Cristian I."/>
            <person name="Buscarilli M."/>
            <person name="Naslavsky M.S."/>
            <person name="Malaquias A.C."/>
            <person name="Zatz M."/>
            <person name="Bodamer O."/>
            <person name="Majewski J."/>
            <person name="Jorge A.A."/>
            <person name="Pereira A.C."/>
            <person name="Kim C.A."/>
            <person name="Passos-Bueno M.R."/>
            <person name="Bertola D.R."/>
        </authorList>
    </citation>
    <scope>INVOLVEMENT IN NS10</scope>
    <scope>VARIANTS NS10 CYS-119; ASN-247; ARG-248; CYS-284 AND TYR-287</scope>
    <scope>VARIANTS LEU-447 AND VAL-647</scope>
</reference>
<reference key="9">
    <citation type="journal article" date="2018" name="Science">
        <title>Mutations in LZTR1 drive human disease by dysregulating RAS ubiquitination.</title>
        <authorList>
            <person name="Steklov M."/>
            <person name="Pandolfi S."/>
            <person name="Baietti M.F."/>
            <person name="Batiuk A."/>
            <person name="Carai P."/>
            <person name="Najm P."/>
            <person name="Zhang M."/>
            <person name="Jang H."/>
            <person name="Renzi F."/>
            <person name="Cai Y."/>
            <person name="Abbasi Asbagh L."/>
            <person name="Pastor T."/>
            <person name="De Troyer M."/>
            <person name="Simicek M."/>
            <person name="Radaelli E."/>
            <person name="Brems H."/>
            <person name="Legius E."/>
            <person name="Tavernier J."/>
            <person name="Gevaert K."/>
            <person name="Impens F."/>
            <person name="Messiaen L."/>
            <person name="Nussinov R."/>
            <person name="Heymans S."/>
            <person name="Eyckerman S."/>
            <person name="Sablina A.A."/>
        </authorList>
    </citation>
    <scope>FUNCTION</scope>
    <scope>SUBUNIT</scope>
    <scope>PATHWAY</scope>
    <scope>INTERACTION WITH CUL3; KRAS</scope>
    <scope>NRAS AND HRAS</scope>
    <scope>SUBCELLULAR LOCATION</scope>
    <scope>VARIANT SWN2 PRO-812</scope>
    <scope>CHARACTERIZATION OF VARIANTS SWN2 LEU-122; ARG-187; ARG-202; ARG-404; GLN-466; CYS-688 AND PRO-812</scope>
    <scope>CHARACTERIZATION OF VARIANT NS10 726-TYR--ILE-840 DEL</scope>
</reference>
<reference key="10">
    <citation type="journal article" date="2018" name="Science">
        <title>LZTR1 is a regulator of RAS ubiquitination and signaling.</title>
        <authorList>
            <person name="Bigenzahn J.W."/>
            <person name="Collu G.M."/>
            <person name="Kartnig F."/>
            <person name="Pieraks M."/>
            <person name="Vladimer G.I."/>
            <person name="Heinz L.X."/>
            <person name="Sedlyarov V."/>
            <person name="Schischlik F."/>
            <person name="Fauster A."/>
            <person name="Rebsamen M."/>
            <person name="Parapatics K."/>
            <person name="Blomen V.A."/>
            <person name="Mueller A.C."/>
            <person name="Winter G.E."/>
            <person name="Kralovics R."/>
            <person name="Brummelkamp T.R."/>
            <person name="Mlodzik M."/>
            <person name="Superti-Furga G."/>
        </authorList>
    </citation>
    <scope>FUNCTION</scope>
    <scope>SUBCELLULAR LOCATION</scope>
    <scope>INTERACTION WITH CUL3</scope>
    <scope>VARIANTS GLM ARG-105; GLY-198; ARG-248; ILE-288 AND TRP-810</scope>
    <scope>CHARACTERIZATION OF VARIANTS GLM ARG-105; GLY-198; ARG-248; ILE-288 AND TRP-810</scope>
    <scope>CHARACTERIZATION OF VARIANTS NS10 CYS-119; ASN-247; ARG-248 AND TYR-287</scope>
    <scope>CHARACTERIZATION OF VARIANTS SWN2 LEU-122; ARG-404; GLY-456; GLN-466; LEU-520; CYS-688 AND ILE-813</scope>
</reference>
<reference key="11">
    <citation type="journal article" date="2019" name="Hum. Mol. Genet.">
        <title>Dominant Noonan syndrome-causing LZTR1 mutations specifically affect the kelch domain substrate-recognition surface and enhance RAS-MAPK signaling.</title>
        <authorList>
            <person name="Motta M."/>
            <person name="Fidan M."/>
            <person name="Bellacchio E."/>
            <person name="Pantaleoni F."/>
            <person name="Schneider-Heieck K."/>
            <person name="Coppola S."/>
            <person name="Borck G."/>
            <person name="Salviati L."/>
            <person name="Zenker M."/>
            <person name="Cirstea I.C."/>
            <person name="Tartaglia M."/>
        </authorList>
    </citation>
    <scope>FUNCTION</scope>
    <scope>SUBCELLULAR LOCATION</scope>
    <scope>CHARACTERIZATION OF VARIANTS NS2 ASP-121; ALA-217; GLN-563 AND THR-821</scope>
    <scope>CHARACTERIZATION OF VARIANTS NS10 ASN-247; ARG-248 AND CYS-284</scope>
    <scope>CHARACTERIZATION OF VARIANTS SWN2 GLN-170; ARG-286 AND ARG-400</scope>
    <scope>MUTAGENESIS OF MET-91 AND TYR-193</scope>
</reference>
<reference key="12">
    <citation type="journal article" date="2015" name="Neurology">
        <title>Mutations in LZTR1 add to the complex heterogeneity of schwannomatosis.</title>
        <authorList>
            <person name="Smith M.J."/>
            <person name="Isidor B."/>
            <person name="Beetz C."/>
            <person name="Williams S.G."/>
            <person name="Bhaskar S.S."/>
            <person name="Richer W."/>
            <person name="O'Sullivan J."/>
            <person name="Anderson B."/>
            <person name="Daly S.B."/>
            <person name="Urquhart J.E."/>
            <person name="Fryer A."/>
            <person name="Rustad C.F."/>
            <person name="Mills S.J."/>
            <person name="Samii A."/>
            <person name="du Plessis D."/>
            <person name="Halliday D."/>
            <person name="Barbarot S."/>
            <person name="Bourdeaut F."/>
            <person name="Newman W.G."/>
            <person name="Evans D.G."/>
        </authorList>
    </citation>
    <scope>VARIANTS SWN2 GLN-170; ARG-202; ARG-286; 322-GLU--ILE-840 DEL; VAL-392; ARG-528; CYS-539; GLY-654; TYR-668; CYS-688 AND 762-GLN--ILE-840 DEL</scope>
</reference>
<reference key="13">
    <citation type="journal article" date="2015" name="Eur. J. Hum. Genet.">
        <title>Expanding the mutational spectrum of LZTR1 in schwannomatosis.</title>
        <authorList>
            <person name="Paganini I."/>
            <person name="Chang V.Y."/>
            <person name="Capone G.L."/>
            <person name="Vitte J."/>
            <person name="Benelli M."/>
            <person name="Barbetti L."/>
            <person name="Sestini R."/>
            <person name="Trevisson E."/>
            <person name="Hulsebos T.J."/>
            <person name="Giovannini M."/>
            <person name="Nelson S.F."/>
            <person name="Papi L."/>
        </authorList>
    </citation>
    <scope>VARIANTS SWN2 ARG-71; 81-TYR--ILE-840 DEL; VAL-125 DEL; ARG-187; 210-ARG--ILE-840 DEL; CYS-284; 340-ARG--ILE-840 DEL; ARG-400; GLU-465; 603-VAL--ILE-840 DEL; TRP-697; ARG-760 AND 762-GLN--ILE-840 DEL</scope>
</reference>
<reference key="14">
    <citation type="journal article" date="2018" name="Genet. Med.">
        <title>Autosomal recessive Noonan syndrome associated with biallelic LZTR1 variants.</title>
        <authorList>
            <consortium name="Members of the Undiagnosed Diseases Network"/>
            <person name="Johnston J.J."/>
            <person name="van der Smagt J.J."/>
            <person name="Rosenfeld J.A."/>
            <person name="Pagnamenta A.T."/>
            <person name="Alswaid A."/>
            <person name="Baker E.H."/>
            <person name="Blair E."/>
            <person name="Borck G."/>
            <person name="Brinkmann J."/>
            <person name="Craigen W."/>
            <person name="Dung V.C."/>
            <person name="Emrick L."/>
            <person name="Everman D.B."/>
            <person name="van Gassen K.L."/>
            <person name="Gulsuner S."/>
            <person name="Harr M.H."/>
            <person name="Jain M."/>
            <person name="Kuechler A."/>
            <person name="Leppig K.A."/>
            <person name="McDonald-McGinn D.M."/>
            <person name="Can N.T.B."/>
            <person name="Peleg A."/>
            <person name="Roeder E.R."/>
            <person name="Rogers R.C."/>
            <person name="Sagi-Dain L."/>
            <person name="Sapp J.C."/>
            <person name="Schaeffer A.A."/>
            <person name="Schanze D."/>
            <person name="Stewart H."/>
            <person name="Taylor J.C."/>
            <person name="Verbeek N.E."/>
            <person name="Walkiewicz M.A."/>
            <person name="Zackai E.H."/>
            <person name="Zweier C."/>
            <person name="Zenker M."/>
            <person name="Lee B."/>
            <person name="Biesecker L.G."/>
        </authorList>
    </citation>
    <scope>VARIANTS NS2 ASP-121; TRP-170; THR-205; 210-ARG--ILE-840 DEL; ALA-217; GLN-563; GLY-688; GLN-697; 726-TYR--ILE-840 DEL; GLN-755 AND THR-821</scope>
    <scope>INVOLVEMENT IN NS2</scope>
</reference>
<reference key="15">
    <citation type="journal article" date="2019" name="Genet. Med.">
        <title>Noonan syndrome associated with growth hormone deficiency with biallelic LZTR1 variants.</title>
        <authorList>
            <person name="Nakaguma M."/>
            <person name="Jorge A.A.L."/>
            <person name="Arnhold I.J.P."/>
        </authorList>
    </citation>
    <scope>VARIANT NS10 LEU-294</scope>
</reference>
<reference key="16">
    <citation type="journal article" date="2019" name="Hum. Genet.">
        <title>Delineation of LZTR1 mutation-positive patients with Noonan syndrome and identification of LZTR1 binding to RAF1-PPP1CB complexes.</title>
        <authorList>
            <person name="Umeki I."/>
            <person name="Niihori T."/>
            <person name="Abe T."/>
            <person name="Kanno S.I."/>
            <person name="Okamoto N."/>
            <person name="Mizuno S."/>
            <person name="Kurosawa K."/>
            <person name="Nagasaki K."/>
            <person name="Yoshida M."/>
            <person name="Ohashi H."/>
            <person name="Inoue S.I."/>
            <person name="Matsubara Y."/>
            <person name="Fujiwara I."/>
            <person name="Kure S."/>
            <person name="Aoki Y."/>
        </authorList>
    </citation>
    <scope>VARIANTS NS10 SER-143; ARG-248; ASN-253 DEL; GLN-283 AND PRO-554</scope>
    <scope>VARIANT NS2 HIS-701</scope>
    <scope>INTERACTION WITH RAF1; SHOC2 AND PPP1CB</scope>
</reference>
<reference key="17">
    <citation type="journal article" date="2021" name="Am. J. Hum. Genet.">
        <title>SPRED2 loss-of-function causes a recessive Noonan syndrome-like phenotype.</title>
        <authorList>
            <person name="Motta M."/>
            <person name="Fasano G."/>
            <person name="Gredy S."/>
            <person name="Brinkmann J."/>
            <person name="Bonnard A.A."/>
            <person name="Simsek-Kiper P.O."/>
            <person name="Gulec E.Y."/>
            <person name="Essaddam L."/>
            <person name="Utine G.E."/>
            <person name="Guarnetti Prandi I."/>
            <person name="Venditti M."/>
            <person name="Pantaleoni F."/>
            <person name="Radio F.C."/>
            <person name="Ciolfi A."/>
            <person name="Petrini S."/>
            <person name="Consoli F."/>
            <person name="Vignal C."/>
            <person name="Hepbasli D."/>
            <person name="Ullrich M."/>
            <person name="de Boer E."/>
            <person name="Vissers L.E.L.M."/>
            <person name="Gritli S."/>
            <person name="Rossi C."/>
            <person name="De Luca A."/>
            <person name="Ben Becher S."/>
            <person name="Gelb B.D."/>
            <person name="Dallapiccola B."/>
            <person name="Lauri A."/>
            <person name="Chillemi G."/>
            <person name="Schuh K."/>
            <person name="Cave H."/>
            <person name="Zenker M."/>
            <person name="Tartaglia M."/>
        </authorList>
    </citation>
    <scope>VARIANT HIS-619</scope>
    <scope>CHARACTERIZATION OF VARIANT HIS-619</scope>
    <scope>SUBCELLULAR LOCATION</scope>
</reference>
<comment type="function">
    <text evidence="11 12 13">Substrate-specific adapter of a BCR (BTB-CUL3-RBX1) E3 ubiquitin-protein ligase complex that mediates ubiquitination of Ras (K-Ras/KRAS, N-Ras/NRAS and H-Ras/HRAS) (PubMed:30442762, PubMed:30442766, PubMed:30481304). Is a negative regulator of RAS-MAPK signaling that acts by controlling Ras levels and decreasing Ras association with membranes (PubMed:30442762, PubMed:30442766, PubMed:30481304).</text>
</comment>
<comment type="pathway">
    <text evidence="11">Protein modification; protein ubiquitination.</text>
</comment>
<comment type="subunit">
    <text evidence="10 11 12">Homodimer (PubMed:30442762). Component of the BCR(LZTR1) E3 ubiquitin ligase complex, at least composed of CUL3, LZTR1 and RBX1 (PubMed:30442762, PubMed:30442766). Interacts with Ras (K-Ras/KRAS, N-Ras/NRAS and H-Ras/HRAS) (PubMed:30442762). Interacts with RAF1 (PubMed:30368668). Interacts with SHOC2 (PubMed:30368668). Interacts with PPP1CB (PubMed:30368668).</text>
</comment>
<comment type="interaction">
    <interactant intactId="EBI-2350056">
        <id>Q8N653</id>
    </interactant>
    <interactant intactId="EBI-720116">
        <id>P60520</id>
        <label>GABARAPL2</label>
    </interactant>
    <organismsDiffer>false</organismsDiffer>
    <experiments>3</experiments>
</comment>
<comment type="interaction">
    <interactant intactId="EBI-2350056">
        <id>Q8N653</id>
    </interactant>
    <interactant intactId="EBI-1052544">
        <id>Q9UGJ1</id>
        <label>TUBGCP4</label>
    </interactant>
    <organismsDiffer>false</organismsDiffer>
    <experiments>4</experiments>
</comment>
<comment type="subcellular location">
    <subcellularLocation>
        <location evidence="11 12">Endomembrane system</location>
    </subcellularLocation>
    <subcellularLocation>
        <location evidence="11">Recycling endosome</location>
    </subcellularLocation>
    <subcellularLocation>
        <location evidence="3 13 14">Golgi apparatus</location>
    </subcellularLocation>
</comment>
<comment type="developmental stage">
    <text evidence="15">Expressed in fetal brain, heart, kidney, liver and lung.</text>
</comment>
<comment type="PTM">
    <text evidence="3">Phosphorylated on tyrosine upon induction of apoptosis, leading to its degradation by the proteasome.</text>
</comment>
<comment type="disease" evidence="12">
    <disease id="DI-02566">
        <name>Glioma</name>
        <acronym>GLM</acronym>
        <description>Gliomas are benign or malignant central nervous system neoplasms derived from glial cells. They comprise astrocytomas and glioblastoma multiforme that are derived from astrocytes, oligodendrogliomas derived from oligodendrocytes and ependymomas derived from ependymocytes.</description>
        <dbReference type="MIM" id="137800"/>
    </disease>
    <text>The protein represented in this entry may be involved in disease pathogenesis.</text>
</comment>
<comment type="disease" evidence="4 5 6 11 12 13">
    <disease id="DI-04051">
        <name>Schwannomatosis 2</name>
        <acronym>SWN2</acronym>
        <description>A form of schwannomatosis, a tumor predisposition syndrome characterized by the development of multiple benign nerve sheath tumors called schwannomas on cranial, spinal, and peripheral nerves, without involvement of the vestibular nerve. SWN2 affected individuals have multiple schwannomas in various areas of the body. SWN2 transmission pattern is consistent with autosomal dominant inheritance and incomplete penetrance.</description>
        <dbReference type="MIM" id="615670"/>
    </disease>
    <text>Disease susceptibility is associated with variants affecting the gene represented in this entry.</text>
</comment>
<comment type="disease" evidence="7 9 10 11 12 13">
    <disease id="DI-04517">
        <name>Noonan syndrome 10</name>
        <acronym>NS10</acronym>
        <description>A form of Noonan syndrome, a disease characterized by short stature, facial dysmorphic features such as hypertelorism, a downward eyeslant and low-set posteriorly rotated ears, and a high incidence of congenital heart defects and hypertrophic cardiomyopathy. Other features can include a short neck with webbing or redundancy of skin, deafness, motor delay, variable intellectual deficits, multiple skeletal defects, cryptorchidism, and bleeding diathesis. Individuals with Noonan syndrome are at risk of juvenile myelomonocytic leukemia, a myeloproliferative disorder characterized by excessive production of myelomonocytic cells. NS10 inheritance is autosomal dominant.</description>
        <dbReference type="MIM" id="616564"/>
    </disease>
    <text>The disease is caused by variants affecting the gene represented in this entry.</text>
</comment>
<comment type="disease" evidence="8 10 13">
    <disease id="DI-05439">
        <name>Noonan syndrome 2</name>
        <acronym>NS2</acronym>
        <description>A form of Noonan syndrome, a disease characterized by short stature, facial dysmorphic features such as hypertelorism, a downward eyeslant and low-set posteriorly rotated ears, and a high incidence of congenital heart defects and hypertrophic cardiomyopathy. Other features can include a short neck with webbing or redundancy of skin, deafness, motor delay, variable intellectual deficits, multiple skeletal defects, cryptorchidism, and bleeding diathesis. Individuals with Noonan syndrome are at risk of juvenile myelomonocytic leukemia, a myeloproliferative disorder characterized by excessive production of myelomonocytic cells. NS2 inheritance is autosomal recessive.</description>
        <dbReference type="MIM" id="605275"/>
    </disease>
    <text>The disease may be caused by variants affecting the gene represented in this entry.</text>
</comment>
<comment type="similarity">
    <text evidence="17">Belongs to the LZTR1 family.</text>
</comment>
<comment type="sequence caution" evidence="17">
    <conflict type="frameshift">
        <sequence resource="EMBL-CDS" id="BAA07508"/>
    </conflict>
</comment>
<proteinExistence type="evidence at protein level"/>
<sequence length="840" mass="94719">MAGPGSTGGQIGAAALAGGARSKVAPSVDFDHSCSDSVEYLTLNFGPFETVHRWRRLPPCDEFVGARRSKHTVVAYKDAIYVFGGDNGKTMLNDLLRFDVKDCSWCRAFTTGTPPAPRYHHSAVVYGSSMFVFGGYTGDIYSNSNLKNKNDLFEYKFATGQWTEWKIEGRLPVARSAHGATVYSDKLWIFAGYDGNARLNDMWTIGLQDRELTCWEEVAQSGEIPPSCCNFPVAVCRDKMFVFSGQSGAKITNNLFQFEFKDKTWTRIPTEHLLRGSPPPPQRRYGHTMVAFDRHLYVFGGAADNTLPNELHCYDVDFQTWEVVQPSSDSEVGGAEVPERACASEEVPTLTYEERVGFKKSRDVFGLDFGTTSAKQPTQPASELPSGRLFHAAAVISDAMYIFGGTVDNNIRSGEMYRFQFSCYPKCTLHEDYGRLWESRQFCDVEFVLGEKEECVQGHVAIVTARSRWLRRKITQARERLAQKLEQEAAPVPREAPGVAAGGARPPLLHVAIREAEARPFEVLMQFLYTDKIKYPRKGHVEDVLLIMDVYKLALSFQLCRLEQLCRQYIEASVDLQNVLVVCESAARLQLSQLKEHCLNFVVKESHFNQVIMMKEFERLSSPLIVEIVRRKQQPPPRTPLDQPVDIGTSLIQDMKAYLEGAGAEFCDITLLLDGHPRPAHKAILAARSSYFEAMFRSFMPEDGQVNISIGEMVPSRQAFESMLRYIYYGEVNMPPEDSLYLFAAPYYYGFYNNRLQAYCKQNLEMNVTVQNVLQILEAADKTQALDMKRHCLHIIVHQFTKVSKLPTLRSLSQQLLLDIIDSLASHISDKQCAELGADI</sequence>
<protein>
    <recommendedName>
        <fullName evidence="16">Leucine-zipper-like transcriptional regulator 1</fullName>
        <shortName evidence="16">LZTR-1</shortName>
    </recommendedName>
</protein>
<gene>
    <name evidence="16 18" type="primary">LZTR1</name>
    <name type="synonym">TCFL2</name>
</gene>
<feature type="initiator methionine" description="Removed" evidence="19">
    <location>
        <position position="1"/>
    </location>
</feature>
<feature type="chain" id="PRO_0000119135" description="Leucine-zipper-like transcriptional regulator 1">
    <location>
        <begin position="2"/>
        <end position="840"/>
    </location>
</feature>
<feature type="repeat" description="Kelch 1" evidence="1">
    <location>
        <begin position="79"/>
        <end position="128"/>
    </location>
</feature>
<feature type="repeat" description="Kelch 2" evidence="1">
    <location>
        <begin position="130"/>
        <end position="185"/>
    </location>
</feature>
<feature type="repeat" description="Kelch 3" evidence="1">
    <location>
        <begin position="187"/>
        <end position="238"/>
    </location>
</feature>
<feature type="repeat" description="Kelch 4" evidence="1">
    <location>
        <begin position="239"/>
        <end position="285"/>
    </location>
</feature>
<feature type="repeat" description="Kelch 5" evidence="1">
    <location>
        <begin position="295"/>
        <end position="341"/>
    </location>
</feature>
<feature type="repeat" description="Kelch 6" evidence="1">
    <location>
        <begin position="399"/>
        <end position="450"/>
    </location>
</feature>
<feature type="domain" description="BTB 1" evidence="2">
    <location>
        <begin position="443"/>
        <end position="537"/>
    </location>
</feature>
<feature type="domain" description="BTB 2" evidence="2">
    <location>
        <begin position="667"/>
        <end position="736"/>
    </location>
</feature>
<feature type="modified residue" description="N-acetylalanine" evidence="19">
    <location>
        <position position="2"/>
    </location>
</feature>
<feature type="sequence variant" id="VAR_081292" description="In SWN2; uncertain significance; dbSNP:rs1359555609." evidence="5">
    <original>H</original>
    <variation>R</variation>
    <location>
        <position position="71"/>
    </location>
</feature>
<feature type="sequence variant" id="VAR_081293" description="In SWN2." evidence="5">
    <location>
        <begin position="81"/>
        <end position="840"/>
    </location>
</feature>
<feature type="sequence variant" id="VAR_081294" description="In GLM; increased Ras signaling." evidence="12">
    <original>W</original>
    <variation>R</variation>
    <location>
        <position position="105"/>
    </location>
</feature>
<feature type="sequence variant" id="VAR_075657" description="In NS10; increased Ras signaling." evidence="7 12">
    <original>Y</original>
    <variation>C</variation>
    <location>
        <position position="119"/>
    </location>
</feature>
<feature type="sequence variant" id="VAR_081295" description="In NS2; uncertain significance; no effect on RAS-MAPK signaling; no effect on stability; dbSNP:rs1569154492." evidence="8 13">
    <original>H</original>
    <variation>D</variation>
    <location>
        <position position="121"/>
    </location>
</feature>
<feature type="sequence variant" id="VAR_071145" description="In SWN2; increased Ras signaling; decreased binding to Ras; dbSNP:rs587777177." evidence="4 11 12">
    <original>S</original>
    <variation>L</variation>
    <location>
        <position position="122"/>
    </location>
</feature>
<feature type="sequence variant" id="VAR_081296" description="In SWN2; uncertain significance; dbSNP:rs755783378." evidence="5">
    <location>
        <position position="125"/>
    </location>
</feature>
<feature type="sequence variant" id="VAR_081297" description="In NS10; uncertain significance." evidence="10">
    <original>N</original>
    <variation>S</variation>
    <location>
        <position position="143"/>
    </location>
</feature>
<feature type="sequence variant" id="VAR_081298" description="In SWN2; increased RAS-MAPK signaling; dbSNP:rs781431741." evidence="6 13">
    <original>R</original>
    <variation>Q</variation>
    <location>
        <position position="170"/>
    </location>
</feature>
<feature type="sequence variant" id="VAR_081299" description="In NS2; when associated in cis with T-205; dbSNP:rs757502214." evidence="8">
    <original>R</original>
    <variation>W</variation>
    <location>
        <position position="170"/>
    </location>
</feature>
<feature type="sequence variant" id="VAR_081300" description="In SWN2; decreased binding to Ras." evidence="5 11">
    <original>L</original>
    <variation>R</variation>
    <location>
        <position position="187"/>
    </location>
</feature>
<feature type="sequence variant" id="VAR_081301" description="In GLM; increased Ras signaling; decreased ubiquitination of Ras." evidence="12">
    <original>R</original>
    <variation>G</variation>
    <location>
        <position position="198"/>
    </location>
</feature>
<feature type="sequence variant" id="VAR_081302" description="In SWN2; decreased binding to Ras." evidence="6 11">
    <original>M</original>
    <variation>R</variation>
    <location>
        <position position="202"/>
    </location>
</feature>
<feature type="sequence variant" id="VAR_081303" description="In NS2; when associated in cis with W-170; uncertain significance; dbSNP:rs1287917092." evidence="8">
    <original>I</original>
    <variation>T</variation>
    <location>
        <position position="205"/>
    </location>
</feature>
<feature type="sequence variant" id="VAR_081304" description="In NS2 and SWN2." evidence="5 8">
    <location>
        <begin position="210"/>
        <end position="840"/>
    </location>
</feature>
<feature type="sequence variant" id="VAR_081305" description="In NS2; uncertain significance; no effect on RAS-MAPK signaling; decreased stability." evidence="8 13">
    <original>E</original>
    <variation>A</variation>
    <location>
        <position position="217"/>
    </location>
</feature>
<feature type="sequence variant" id="VAR_075658" description="In NS10; increased RAS-MAPK signaling; decreased stability; no effect on localization to Golgi apparatus; dbSNP:rs797045166." evidence="7 12 13">
    <original>S</original>
    <variation>N</variation>
    <location>
        <position position="247"/>
    </location>
</feature>
<feature type="sequence variant" id="VAR_075659" description="In NS10 and GLM; increased RAS-MAPK signaling; decreased ubiquitination of Ras; decreased stability; no effect on localization to Golgi apparatus; dbSNP:rs869320686." evidence="7 10 12 13">
    <original>G</original>
    <variation>R</variation>
    <location>
        <position position="248"/>
    </location>
</feature>
<feature type="sequence variant" id="VAR_081306" description="In NS10; uncertain significance." evidence="10">
    <location>
        <position position="253"/>
    </location>
</feature>
<feature type="sequence variant" id="VAR_081307" description="In NS10; dbSNP:rs1223430276." evidence="10">
    <original>R</original>
    <variation>Q</variation>
    <location>
        <position position="283"/>
    </location>
</feature>
<feature type="sequence variant" id="VAR_075660" description="In NS10 and SWN2; increased RAS-MAPK signaling; decreased stability; no effect on localization to Golgi apparatus; dbSNP:rs797045165." evidence="5 7 13">
    <original>R</original>
    <variation>C</variation>
    <location>
        <position position="284"/>
    </location>
</feature>
<feature type="sequence variant" id="VAR_081308" description="In SWN2; uncertain significance; no effect on stability; dbSNP:rs773016962." evidence="6 13">
    <original>G</original>
    <variation>R</variation>
    <location>
        <position position="286"/>
    </location>
</feature>
<feature type="sequence variant" id="VAR_075661" description="In NS10; increased Ras signaling." evidence="7 12">
    <original>H</original>
    <variation>Y</variation>
    <location>
        <position position="287"/>
    </location>
</feature>
<feature type="sequence variant" id="VAR_081309" description="In GLM; increased Ras signaling." evidence="12">
    <original>T</original>
    <variation>I</variation>
    <location>
        <position position="288"/>
    </location>
</feature>
<feature type="sequence variant" id="VAR_081310" description="In NS10; uncertain significance." evidence="9">
    <original>R</original>
    <variation>L</variation>
    <location>
        <position position="294"/>
    </location>
</feature>
<feature type="sequence variant" id="VAR_081311" description="In SWN2." evidence="6">
    <location>
        <begin position="322"/>
        <end position="840"/>
    </location>
</feature>
<feature type="sequence variant" id="VAR_081312" description="In SWN2." evidence="5">
    <location>
        <begin position="340"/>
        <end position="840"/>
    </location>
</feature>
<feature type="sequence variant" id="VAR_081313" description="In SWN2; uncertain significance; dbSNP:rs767354230." evidence="6">
    <original>A</original>
    <variation>V</variation>
    <location>
        <position position="392"/>
    </location>
</feature>
<feature type="sequence variant" id="VAR_081314" description="In SWN2; uncertain significance; no effect on stability; no effect on localization to Golgi apparatus." evidence="5 13">
    <original>M</original>
    <variation>R</variation>
    <location>
        <position position="400"/>
    </location>
</feature>
<feature type="sequence variant" id="VAR_071146" description="In SWN2; increased Ras signaling; decreased binding to Ras; dbSNP:rs1470449160." evidence="4 11 12">
    <original>G</original>
    <variation>R</variation>
    <location>
        <position position="404"/>
    </location>
</feature>
<feature type="sequence variant" id="VAR_075662" description="In dbSNP:rs201016956." evidence="7">
    <original>F</original>
    <variation>L</variation>
    <location>
        <position position="447"/>
    </location>
</feature>
<feature type="sequence variant" id="VAR_071147" description="In SWN2; increased Ras signaling; impaired subcellular location." evidence="4 12">
    <original>V</original>
    <variation>G</variation>
    <location>
        <position position="456"/>
    </location>
</feature>
<feature type="sequence variant" id="VAR_081315" description="In SWN2; uncertain significance; dbSNP:rs753757778." evidence="5">
    <original>A</original>
    <variation>E</variation>
    <location>
        <position position="465"/>
    </location>
</feature>
<feature type="sequence variant" id="VAR_071148" description="In SWN2; increased Ras signaling; decreased interaction with CUL3; impaired subcellular location; impaired subcellular location; dbSNP:rs587777180." evidence="4 11 12">
    <original>R</original>
    <variation>Q</variation>
    <location>
        <position position="466"/>
    </location>
</feature>
<feature type="sequence variant" id="VAR_071149" description="In SWN2; increased Ras signaling; impaired subcellular location; dbSNP:rs1569157089." evidence="4 12">
    <original>P</original>
    <variation>L</variation>
    <location>
        <position position="520"/>
    </location>
</feature>
<feature type="sequence variant" id="VAR_081316" description="In SWN2; uncertain significance; dbSNP:rs1924724869." evidence="6">
    <original>L</original>
    <variation>R</variation>
    <location>
        <position position="528"/>
    </location>
</feature>
<feature type="sequence variant" id="VAR_081317" description="In SWN2; uncertain significance; somatic mutation; dbSNP:rs1232362523." evidence="6">
    <original>G</original>
    <variation>C</variation>
    <location>
        <position position="539"/>
    </location>
</feature>
<feature type="sequence variant" id="VAR_081318" description="In NS10; uncertain significance." evidence="10">
    <original>A</original>
    <variation>P</variation>
    <location>
        <position position="554"/>
    </location>
</feature>
<feature type="sequence variant" id="VAR_081319" description="In NS2; uncertain significance; no effect on RAS-MAPK signaling; strongly decreased stability; dbSNP:rs1374240053." evidence="8 13">
    <original>E</original>
    <variation>Q</variation>
    <location>
        <position position="563"/>
    </location>
</feature>
<feature type="sequence variant" id="VAR_081320" description="In SWN2." evidence="5">
    <location>
        <begin position="603"/>
        <end position="840"/>
    </location>
</feature>
<feature type="sequence variant" id="VAR_086931" description="Has not effect on protein abundance; does not affect localization to Golgi apparatus; does not affect function in regulation of RAS-MAPK signaling; dbSNP:rs568213908." evidence="14">
    <original>R</original>
    <variation>H</variation>
    <location>
        <position position="619"/>
    </location>
</feature>
<feature type="sequence variant" id="VAR_075663" description="In dbSNP:rs148916790." evidence="7">
    <original>I</original>
    <variation>V</variation>
    <location>
        <position position="647"/>
    </location>
</feature>
<feature type="sequence variant" id="VAR_081321" description="In SWN2; uncertain significance." evidence="6">
    <original>D</original>
    <variation>G</variation>
    <location>
        <position position="654"/>
    </location>
</feature>
<feature type="sequence variant" id="VAR_081322" description="In SWN2; uncertain significance; dbSNP:rs776005012." evidence="6">
    <original>D</original>
    <variation>Y</variation>
    <location>
        <position position="668"/>
    </location>
</feature>
<feature type="sequence variant" id="VAR_071150" description="In SWN2; increased Ras signaling; decreased interaction with CUL3; impaired subcellular location; dbSNP:rs587777178." evidence="4 6 11 12">
    <original>R</original>
    <variation>C</variation>
    <location>
        <position position="688"/>
    </location>
</feature>
<feature type="sequence variant" id="VAR_081323" description="In NS2; uncertain significance." evidence="8">
    <original>R</original>
    <variation>G</variation>
    <location>
        <position position="688"/>
    </location>
</feature>
<feature type="sequence variant" id="VAR_081324" description="In NS2; dbSNP:rs370638947." evidence="8">
    <original>R</original>
    <variation>Q</variation>
    <location>
        <position position="697"/>
    </location>
</feature>
<feature type="sequence variant" id="VAR_081325" description="In SWN2; uncertain significance; dbSNP:rs751516987." evidence="5">
    <original>R</original>
    <variation>W</variation>
    <location>
        <position position="697"/>
    </location>
</feature>
<feature type="sequence variant" id="VAR_081326" description="In NS2; dbSNP:rs1327579827." evidence="10">
    <original>P</original>
    <variation>H</variation>
    <location>
        <position position="701"/>
    </location>
</feature>
<feature type="sequence variant" id="VAR_081327" description="In NS2; decreased ubiquitination of Ras." evidence="8 11">
    <location>
        <begin position="726"/>
        <end position="840"/>
    </location>
</feature>
<feature type="sequence variant" id="VAR_081328" description="In NS2; uncertain significance; dbSNP:rs762834512." evidence="8">
    <original>R</original>
    <variation>Q</variation>
    <location>
        <position position="755"/>
    </location>
</feature>
<feature type="sequence variant" id="VAR_081329" description="In SWN2; uncertain significance; dbSNP:rs1419388177." evidence="5">
    <original>C</original>
    <variation>R</variation>
    <location>
        <position position="760"/>
    </location>
</feature>
<feature type="sequence variant" id="VAR_081330" description="In SWN2." evidence="5 6">
    <location>
        <begin position="762"/>
        <end position="840"/>
    </location>
</feature>
<feature type="sequence variant" id="VAR_081331" description="In GLM; increased Ras signaling; dbSNP:rs776893978." evidence="12">
    <original>R</original>
    <variation>W</variation>
    <location>
        <position position="810"/>
    </location>
</feature>
<feature type="sequence variant" id="VAR_081332" description="In SWN2; decreased interaction with CUL3; impaired subcellular location; decreased ubiquitination of Ras; dbSNP:rs773059569." evidence="11">
    <original>L</original>
    <variation>P</variation>
    <location>
        <position position="812"/>
    </location>
</feature>
<feature type="sequence variant" id="VAR_071151" description="In SWN2; increased Ras signaling; dbSNP:rs2147970970." evidence="4 12">
    <original>S</original>
    <variation>I</variation>
    <location>
        <position position="813"/>
    </location>
</feature>
<feature type="sequence variant" id="VAR_081333" description="In NS2; uncertain significance; no effect on RAS-MAPK signaling; decreased localization to Golgi apparatus; no effect on stability; dbSNP:rs1275511136." evidence="8 13">
    <original>I</original>
    <variation>T</variation>
    <location>
        <position position="821"/>
    </location>
</feature>
<feature type="mutagenesis site" description="Increased RAS-MAPK signaling." evidence="13">
    <original>M</original>
    <variation>V</variation>
    <location>
        <position position="91"/>
    </location>
</feature>
<feature type="mutagenesis site" description="Increased RAS-MAPK signaling." evidence="13">
    <original>Y</original>
    <variation>H</variation>
    <location>
        <position position="193"/>
    </location>
</feature>
<feature type="mutagenesis site" description="Increased RAS-MAPK signaling." evidence="13">
    <original>Y</original>
    <variation>N</variation>
    <location>
        <position position="193"/>
    </location>
</feature>
<feature type="sequence conflict" description="In Ref. 4; BAA07508." evidence="17" ref="4">
    <original>G</original>
    <variation>S</variation>
    <location>
        <position position="498"/>
    </location>
</feature>
<dbReference type="EMBL" id="CT841521">
    <property type="protein sequence ID" value="CAJ86451.1"/>
    <property type="molecule type" value="mRNA"/>
</dbReference>
<dbReference type="EMBL" id="CH471176">
    <property type="protein sequence ID" value="EAX02923.1"/>
    <property type="molecule type" value="Genomic_DNA"/>
</dbReference>
<dbReference type="EMBL" id="BC026214">
    <property type="protein sequence ID" value="AAH26214.2"/>
    <property type="molecule type" value="mRNA"/>
</dbReference>
<dbReference type="EMBL" id="D38496">
    <property type="protein sequence ID" value="BAA07508.1"/>
    <property type="status" value="ALT_FRAME"/>
    <property type="molecule type" value="mRNA"/>
</dbReference>
<dbReference type="CCDS" id="CCDS33606.1"/>
<dbReference type="PIR" id="I54388">
    <property type="entry name" value="I54388"/>
</dbReference>
<dbReference type="RefSeq" id="NP_006758.2">
    <property type="nucleotide sequence ID" value="NM_006767.3"/>
</dbReference>
<dbReference type="SMR" id="Q8N653"/>
<dbReference type="BioGRID" id="113852">
    <property type="interactions" value="113"/>
</dbReference>
<dbReference type="FunCoup" id="Q8N653">
    <property type="interactions" value="1057"/>
</dbReference>
<dbReference type="IntAct" id="Q8N653">
    <property type="interactions" value="81"/>
</dbReference>
<dbReference type="MINT" id="Q8N653"/>
<dbReference type="STRING" id="9606.ENSP00000496779"/>
<dbReference type="iPTMnet" id="Q8N653"/>
<dbReference type="PhosphoSitePlus" id="Q8N653"/>
<dbReference type="BioMuta" id="LZTR1"/>
<dbReference type="DMDM" id="29839558"/>
<dbReference type="jPOST" id="Q8N653"/>
<dbReference type="MassIVE" id="Q8N653"/>
<dbReference type="PaxDb" id="9606-ENSP00000215739"/>
<dbReference type="PeptideAtlas" id="Q8N653"/>
<dbReference type="ProteomicsDB" id="72130"/>
<dbReference type="Pumba" id="Q8N653"/>
<dbReference type="Antibodypedia" id="8368">
    <property type="antibodies" value="133 antibodies from 27 providers"/>
</dbReference>
<dbReference type="DNASU" id="8216"/>
<dbReference type="Ensembl" id="ENST00000646124.2">
    <property type="protein sequence ID" value="ENSP00000496779.1"/>
    <property type="gene ID" value="ENSG00000099949.22"/>
</dbReference>
<dbReference type="GeneID" id="8216"/>
<dbReference type="KEGG" id="hsa:8216"/>
<dbReference type="MANE-Select" id="ENST00000646124.2">
    <property type="protein sequence ID" value="ENSP00000496779.1"/>
    <property type="RefSeq nucleotide sequence ID" value="NM_006767.4"/>
    <property type="RefSeq protein sequence ID" value="NP_006758.2"/>
</dbReference>
<dbReference type="UCSC" id="uc002zto.4">
    <property type="organism name" value="human"/>
</dbReference>
<dbReference type="AGR" id="HGNC:6742"/>
<dbReference type="CTD" id="8216"/>
<dbReference type="DisGeNET" id="8216"/>
<dbReference type="GeneCards" id="LZTR1"/>
<dbReference type="GeneReviews" id="LZTR1"/>
<dbReference type="HGNC" id="HGNC:6742">
    <property type="gene designation" value="LZTR1"/>
</dbReference>
<dbReference type="HPA" id="ENSG00000099949">
    <property type="expression patterns" value="Low tissue specificity"/>
</dbReference>
<dbReference type="MalaCards" id="LZTR1"/>
<dbReference type="MIM" id="137800">
    <property type="type" value="phenotype"/>
</dbReference>
<dbReference type="MIM" id="600574">
    <property type="type" value="gene"/>
</dbReference>
<dbReference type="MIM" id="605275">
    <property type="type" value="phenotype"/>
</dbReference>
<dbReference type="MIM" id="615670">
    <property type="type" value="phenotype"/>
</dbReference>
<dbReference type="MIM" id="616564">
    <property type="type" value="phenotype"/>
</dbReference>
<dbReference type="neXtProt" id="NX_Q8N653"/>
<dbReference type="OpenTargets" id="ENSG00000099949"/>
<dbReference type="Orphanet" id="93921">
    <property type="disease" value="Full schwannomatosis"/>
</dbReference>
<dbReference type="Orphanet" id="251579">
    <property type="disease" value="Giant cell glioblastoma"/>
</dbReference>
<dbReference type="Orphanet" id="251576">
    <property type="disease" value="Gliosarcoma"/>
</dbReference>
<dbReference type="Orphanet" id="648">
    <property type="disease" value="Noonan syndrome"/>
</dbReference>
<dbReference type="PharmGKB" id="PA30506"/>
<dbReference type="VEuPathDB" id="HostDB:ENSG00000099949"/>
<dbReference type="eggNOG" id="KOG4693">
    <property type="taxonomic scope" value="Eukaryota"/>
</dbReference>
<dbReference type="GeneTree" id="ENSGT00940000158190"/>
<dbReference type="HOGENOM" id="CLU_012081_0_0_1"/>
<dbReference type="InParanoid" id="Q8N653"/>
<dbReference type="OMA" id="YKEAIYV"/>
<dbReference type="OrthoDB" id="10250130at2759"/>
<dbReference type="PAN-GO" id="Q8N653">
    <property type="GO annotations" value="1 GO annotation based on evolutionary models"/>
</dbReference>
<dbReference type="PhylomeDB" id="Q8N653"/>
<dbReference type="TreeFam" id="TF314081"/>
<dbReference type="PathwayCommons" id="Q8N653"/>
<dbReference type="SignaLink" id="Q8N653"/>
<dbReference type="SIGNOR" id="Q8N653"/>
<dbReference type="UniPathway" id="UPA00143"/>
<dbReference type="BioGRID-ORCS" id="8216">
    <property type="hits" value="44 hits in 1203 CRISPR screens"/>
</dbReference>
<dbReference type="ChiTaRS" id="LZTR1">
    <property type="organism name" value="human"/>
</dbReference>
<dbReference type="GeneWiki" id="LZTR1"/>
<dbReference type="GenomeRNAi" id="8216"/>
<dbReference type="Pharos" id="Q8N653">
    <property type="development level" value="Tbio"/>
</dbReference>
<dbReference type="PRO" id="PR:Q8N653"/>
<dbReference type="Proteomes" id="UP000005640">
    <property type="component" value="Chromosome 22"/>
</dbReference>
<dbReference type="RNAct" id="Q8N653">
    <property type="molecule type" value="protein"/>
</dbReference>
<dbReference type="Bgee" id="ENSG00000099949">
    <property type="expression patterns" value="Expressed in sural nerve and 95 other cell types or tissues"/>
</dbReference>
<dbReference type="ExpressionAtlas" id="Q8N653">
    <property type="expression patterns" value="baseline and differential"/>
</dbReference>
<dbReference type="GO" id="GO:0031463">
    <property type="term" value="C:Cul3-RING ubiquitin ligase complex"/>
    <property type="evidence" value="ECO:0000314"/>
    <property type="project" value="UniProtKB"/>
</dbReference>
<dbReference type="GO" id="GO:0012505">
    <property type="term" value="C:endomembrane system"/>
    <property type="evidence" value="ECO:0000314"/>
    <property type="project" value="UniProtKB"/>
</dbReference>
<dbReference type="GO" id="GO:0005794">
    <property type="term" value="C:Golgi apparatus"/>
    <property type="evidence" value="ECO:0000314"/>
    <property type="project" value="UniProtKB"/>
</dbReference>
<dbReference type="GO" id="GO:0055038">
    <property type="term" value="C:recycling endosome membrane"/>
    <property type="evidence" value="ECO:0000314"/>
    <property type="project" value="UniProtKB"/>
</dbReference>
<dbReference type="GO" id="GO:0031267">
    <property type="term" value="F:small GTPase binding"/>
    <property type="evidence" value="ECO:0000314"/>
    <property type="project" value="UniProtKB"/>
</dbReference>
<dbReference type="GO" id="GO:0046580">
    <property type="term" value="P:negative regulation of Ras protein signal transduction"/>
    <property type="evidence" value="ECO:0000314"/>
    <property type="project" value="UniProtKB"/>
</dbReference>
<dbReference type="GO" id="GO:0016567">
    <property type="term" value="P:protein ubiquitination"/>
    <property type="evidence" value="ECO:0000314"/>
    <property type="project" value="UniProtKB"/>
</dbReference>
<dbReference type="CDD" id="cd18505">
    <property type="entry name" value="BACK1_LZTR1"/>
    <property type="match status" value="1"/>
</dbReference>
<dbReference type="CDD" id="cd18506">
    <property type="entry name" value="BACK2_LZTR1"/>
    <property type="match status" value="1"/>
</dbReference>
<dbReference type="CDD" id="cd18308">
    <property type="entry name" value="BTB1_POZ_LZTR1"/>
    <property type="match status" value="1"/>
</dbReference>
<dbReference type="CDD" id="cd18309">
    <property type="entry name" value="BTB2_POZ_LZTR1"/>
    <property type="match status" value="1"/>
</dbReference>
<dbReference type="FunFam" id="3.30.710.10:FF:000024">
    <property type="entry name" value="Leucine-zipper-like transcriptional regulator 1"/>
    <property type="match status" value="1"/>
</dbReference>
<dbReference type="FunFam" id="2.120.10.80:FF:000038">
    <property type="entry name" value="leucine-zipper-like transcriptional regulator 1 isoform X1"/>
    <property type="match status" value="1"/>
</dbReference>
<dbReference type="FunFam" id="2.120.10.80:FF:000045">
    <property type="entry name" value="leucine-zipper-like transcriptional regulator 1 isoform X1"/>
    <property type="match status" value="1"/>
</dbReference>
<dbReference type="FunFam" id="3.30.710.10:FF:000049">
    <property type="entry name" value="leucine-zipper-like transcriptional regulator 1 isoform X1"/>
    <property type="match status" value="1"/>
</dbReference>
<dbReference type="Gene3D" id="2.120.10.80">
    <property type="entry name" value="Kelch-type beta propeller"/>
    <property type="match status" value="3"/>
</dbReference>
<dbReference type="Gene3D" id="3.30.710.10">
    <property type="entry name" value="Potassium Channel Kv1.1, Chain A"/>
    <property type="match status" value="2"/>
</dbReference>
<dbReference type="InterPro" id="IPR000210">
    <property type="entry name" value="BTB/POZ_dom"/>
</dbReference>
<dbReference type="InterPro" id="IPR015915">
    <property type="entry name" value="Kelch-typ_b-propeller"/>
</dbReference>
<dbReference type="InterPro" id="IPR006652">
    <property type="entry name" value="Kelch_1"/>
</dbReference>
<dbReference type="InterPro" id="IPR051568">
    <property type="entry name" value="LZTR1/Attractin"/>
</dbReference>
<dbReference type="InterPro" id="IPR011333">
    <property type="entry name" value="SKP1/BTB/POZ_sf"/>
</dbReference>
<dbReference type="PANTHER" id="PTHR46376">
    <property type="entry name" value="LEUCINE-ZIPPER-LIKE TRANSCRIPTIONAL REGULATOR 1"/>
    <property type="match status" value="1"/>
</dbReference>
<dbReference type="PANTHER" id="PTHR46376:SF1">
    <property type="entry name" value="LEUCINE-ZIPPER-LIKE TRANSCRIPTIONAL REGULATOR 1"/>
    <property type="match status" value="1"/>
</dbReference>
<dbReference type="Pfam" id="PF00651">
    <property type="entry name" value="BTB"/>
    <property type="match status" value="2"/>
</dbReference>
<dbReference type="Pfam" id="PF01344">
    <property type="entry name" value="Kelch_1"/>
    <property type="match status" value="1"/>
</dbReference>
<dbReference type="Pfam" id="PF24681">
    <property type="entry name" value="Kelch_KLHDC2_KLHL20_DRC7"/>
    <property type="match status" value="1"/>
</dbReference>
<dbReference type="SMART" id="SM00225">
    <property type="entry name" value="BTB"/>
    <property type="match status" value="2"/>
</dbReference>
<dbReference type="SMART" id="SM00612">
    <property type="entry name" value="Kelch"/>
    <property type="match status" value="4"/>
</dbReference>
<dbReference type="SUPFAM" id="SSF117281">
    <property type="entry name" value="Kelch motif"/>
    <property type="match status" value="2"/>
</dbReference>
<dbReference type="SUPFAM" id="SSF54695">
    <property type="entry name" value="POZ domain"/>
    <property type="match status" value="2"/>
</dbReference>
<dbReference type="PROSITE" id="PS50097">
    <property type="entry name" value="BTB"/>
    <property type="match status" value="2"/>
</dbReference>
<organism>
    <name type="scientific">Homo sapiens</name>
    <name type="common">Human</name>
    <dbReference type="NCBI Taxonomy" id="9606"/>
    <lineage>
        <taxon>Eukaryota</taxon>
        <taxon>Metazoa</taxon>
        <taxon>Chordata</taxon>
        <taxon>Craniata</taxon>
        <taxon>Vertebrata</taxon>
        <taxon>Euteleostomi</taxon>
        <taxon>Mammalia</taxon>
        <taxon>Eutheria</taxon>
        <taxon>Euarchontoglires</taxon>
        <taxon>Primates</taxon>
        <taxon>Haplorrhini</taxon>
        <taxon>Catarrhini</taxon>
        <taxon>Hominidae</taxon>
        <taxon>Homo</taxon>
    </lineage>
</organism>